<evidence type="ECO:0000250" key="1">
    <source>
        <dbReference type="UniProtKB" id="Q00910"/>
    </source>
</evidence>
<evidence type="ECO:0000250" key="2">
    <source>
        <dbReference type="UniProtKB" id="Q92959"/>
    </source>
</evidence>
<evidence type="ECO:0000255" key="3"/>
<evidence type="ECO:0000255" key="4">
    <source>
        <dbReference type="PROSITE-ProRule" id="PRU00798"/>
    </source>
</evidence>
<evidence type="ECO:0000256" key="5">
    <source>
        <dbReference type="SAM" id="MobiDB-lite"/>
    </source>
</evidence>
<evidence type="ECO:0000269" key="6">
    <source>
    </source>
</evidence>
<evidence type="ECO:0000269" key="7">
    <source>
    </source>
</evidence>
<evidence type="ECO:0000269" key="8">
    <source>
    </source>
</evidence>
<evidence type="ECO:0000269" key="9">
    <source>
    </source>
</evidence>
<evidence type="ECO:0000269" key="10">
    <source>
    </source>
</evidence>
<evidence type="ECO:0000269" key="11">
    <source>
    </source>
</evidence>
<evidence type="ECO:0000303" key="12">
    <source>
    </source>
</evidence>
<evidence type="ECO:0000303" key="13">
    <source>
    </source>
</evidence>
<evidence type="ECO:0000303" key="14">
    <source>
    </source>
</evidence>
<evidence type="ECO:0000303" key="15">
    <source>
    </source>
</evidence>
<evidence type="ECO:0000303" key="16">
    <source>
    </source>
</evidence>
<evidence type="ECO:0000303" key="17">
    <source>
    </source>
</evidence>
<evidence type="ECO:0000303" key="18">
    <source>
    </source>
</evidence>
<evidence type="ECO:0000305" key="19"/>
<evidence type="ECO:0000305" key="20">
    <source>
    </source>
</evidence>
<evidence type="ECO:0000305" key="21">
    <source>
    </source>
</evidence>
<evidence type="ECO:0000305" key="22">
    <source>
    </source>
</evidence>
<evidence type="ECO:0000312" key="23">
    <source>
        <dbReference type="MGI" id="MGI:1346021"/>
    </source>
</evidence>
<gene>
    <name evidence="23" type="primary">Slco2a1</name>
    <name type="synonym">Oatp2a1</name>
    <name type="synonym">Slc21a2</name>
</gene>
<proteinExistence type="evidence at protein level"/>
<protein>
    <recommendedName>
        <fullName evidence="19">Solute carrier organic anion transporter family member 2A1</fullName>
        <shortName evidence="15 16 17 18">SLCO2A1</shortName>
    </recommendedName>
    <alternativeName>
        <fullName evidence="15">OATP2A1</fullName>
    </alternativeName>
    <alternativeName>
        <fullName>PHOAR2</fullName>
    </alternativeName>
    <alternativeName>
        <fullName evidence="12 14">Prostaglandin transporter</fullName>
        <shortName evidence="12 14">PGT</shortName>
    </alternativeName>
    <alternativeName>
        <fullName>Solute carrier family 21 member 2</fullName>
        <shortName>SLC21A2</shortName>
    </alternativeName>
</protein>
<sequence>MGLLPKPGARQGSGTSSVPARRCSRSVFNNIKVFVLCHGLLQLCQLLYSAYFKSSLTTIEKRFGLSSSSSGLISSLNEISNAILIIFVSYFGSRVNRPRMIGIGGLLLAAGAFVLTLPHFLSEPYQYASTTAGNSSHFQTDLCQKHLPGLLPSKCHSTVPDTQKETSSMWSLMVVAQLLAGVGTVPIQPFGISYVDDFAEPTNSPLYISILFAIAVFGPAFGYLLGSVMLRIFVDYGRVDTATVNLSPGDPRWIGAWWLGLLISSGFLIVTSLPFFFFPRAMSRGAERSVIAEETMKMEEDKSRGSLMDFIKRFPRIFLRLLMNPLFMLVVLSQCTFSSVIAGLSTFLNKFLEKQYDASAAYANLLIGAVNLPAAALGMLFGGILMKRFVFPLQTIPRVAATIMTISIILCAPLFFMGCSTPAVAEVYPPSTPSSIHPQPPACRRDCLCPDSVFHPVCGDNGVEYLSPCHAGCSSLNVSSAASKQPIYLNCSCVTGGSASAKTGSCPTSCAQLLLPSIFLISFVALIACVSHNPLYMMVLRVVNQDEKSFAIGVQFLLMRLLAWLPSPSLYGLLIDSSCIRWNYLCSGRRGACAYYDNDALRNRYLGLQVIYKVLGTLLLFFISWRVKKNREYSLQENASGLI</sequence>
<name>SO2A1_MOUSE</name>
<accession>Q9EPT5</accession>
<organism>
    <name type="scientific">Mus musculus</name>
    <name type="common">Mouse</name>
    <dbReference type="NCBI Taxonomy" id="10090"/>
    <lineage>
        <taxon>Eukaryota</taxon>
        <taxon>Metazoa</taxon>
        <taxon>Chordata</taxon>
        <taxon>Craniata</taxon>
        <taxon>Vertebrata</taxon>
        <taxon>Euteleostomi</taxon>
        <taxon>Mammalia</taxon>
        <taxon>Eutheria</taxon>
        <taxon>Euarchontoglires</taxon>
        <taxon>Glires</taxon>
        <taxon>Rodentia</taxon>
        <taxon>Myomorpha</taxon>
        <taxon>Muroidea</taxon>
        <taxon>Muridae</taxon>
        <taxon>Murinae</taxon>
        <taxon>Mus</taxon>
        <taxon>Mus</taxon>
    </lineage>
</organism>
<keyword id="KW-0025">Alternative splicing</keyword>
<keyword id="KW-1003">Cell membrane</keyword>
<keyword id="KW-0963">Cytoplasm</keyword>
<keyword id="KW-1015">Disulfide bond</keyword>
<keyword id="KW-0325">Glycoprotein</keyword>
<keyword id="KW-0445">Lipid transport</keyword>
<keyword id="KW-0458">Lysosome</keyword>
<keyword id="KW-0472">Membrane</keyword>
<keyword id="KW-1185">Reference proteome</keyword>
<keyword id="KW-0812">Transmembrane</keyword>
<keyword id="KW-1133">Transmembrane helix</keyword>
<keyword id="KW-0813">Transport</keyword>
<reference key="1">
    <citation type="journal article" date="1999" name="Am. J. Physiol.">
        <title>Cloning of mouse prostaglandin transporter PGT cDNA: species-specific substrate affinities.</title>
        <authorList>
            <person name="Pucci M.L."/>
            <person name="Bao Y."/>
            <person name="Chan B."/>
            <person name="Itoh S."/>
            <person name="Lu R."/>
            <person name="Copeland N.G."/>
            <person name="Gilbert D.J."/>
            <person name="Jenkins N.A."/>
            <person name="Schuster V.L."/>
        </authorList>
    </citation>
    <scope>NUCLEOTIDE SEQUENCE [MRNA] (ISOFORM 1)</scope>
    <scope>MUTAGENESIS OF VAL-610 AND ILE-611</scope>
    <scope>TISSUE SPECIFICITY</scope>
    <scope>FUNCTION</scope>
    <scope>TRANSPORTER ACTIVITY</scope>
    <source>
        <tissue>Lung</tissue>
    </source>
</reference>
<reference key="2">
    <citation type="journal article" date="2004" name="Genome Res.">
        <title>The status, quality, and expansion of the NIH full-length cDNA project: the Mammalian Gene Collection (MGC).</title>
        <authorList>
            <consortium name="The MGC Project Team"/>
        </authorList>
    </citation>
    <scope>NUCLEOTIDE SEQUENCE [LARGE SCALE MRNA] (ISOFORM 2)</scope>
    <source>
        <strain>FVB/N</strain>
        <tissue>Mammary cancer</tissue>
    </source>
</reference>
<reference key="3">
    <citation type="journal article" date="2008" name="Am. J. Physiol.">
        <title>Dietary salt induces transcription of the prostaglandin transporter gene in renal collecting ducts.</title>
        <authorList>
            <person name="Chi Y."/>
            <person name="Pucci M.L."/>
            <person name="Schuster V.L."/>
        </authorList>
    </citation>
    <scope>FUNCTION</scope>
    <scope>TRANSPORTER ACTIVITY</scope>
    <scope>ACTIVITY REGULATION</scope>
    <scope>TISSUE SPECIFICITY</scope>
</reference>
<reference key="4">
    <citation type="journal article" date="2015" name="Biochem. Pharmacol.">
        <title>OATP2A1/SLCO2A1-mediated prostaglandin E2 loading into intracellular acidic compartments of macrophages contributes to exocytotic secretion.</title>
        <authorList>
            <person name="Shimada H."/>
            <person name="Nakamura Y."/>
            <person name="Nakanishi T."/>
            <person name="Tamai I."/>
        </authorList>
    </citation>
    <scope>FUNCTION</scope>
    <scope>TISSUE SPECIFICITY</scope>
    <scope>SUBCELLULAR LOCATION</scope>
    <scope>TRANSPORTER ACTIVITY</scope>
</reference>
<reference key="5">
    <citation type="journal article" date="2016" name="Prostaglandins Other Lipid Mediat.">
        <title>Prostaglandin transporter (OATP2A1/SLCO2A1) contributes to local disposition of eicosapentaenoic acid-derived PGE3.</title>
        <authorList>
            <person name="Gose T."/>
            <person name="Nakanishi T."/>
            <person name="Kamo S."/>
            <person name="Shimada H."/>
            <person name="Otake K."/>
            <person name="Tamai I."/>
        </authorList>
    </citation>
    <scope>FUNCTION</scope>
    <scope>TRANSPORTER ACTIVITY</scope>
</reference>
<reference key="6">
    <citation type="journal article" date="2016" name="Sci. Transl. Med.">
        <title>The prostaglandin transporter (PGT) as a potential mediator of ovulation.</title>
        <authorList>
            <person name="Yerushalmi G.M."/>
            <person name="Markman S."/>
            <person name="Yung Y."/>
            <person name="Maman E."/>
            <person name="Aviel-Ronen S."/>
            <person name="Orvieto R."/>
            <person name="Adashi E.Y."/>
            <person name="Hourvitz A."/>
        </authorList>
    </citation>
    <scope>FUNCTION</scope>
    <scope>TISSUE SPECIFICITY</scope>
    <scope>ACTIVITY REGULATION</scope>
</reference>
<reference key="7">
    <citation type="journal article" date="2017" name="EMBO J.">
        <title>The organic anion transporter SLCO2A1 constitutes the core component of the Maxi-Cl channel.</title>
        <authorList>
            <person name="Sabirov R.Z."/>
            <person name="Merzlyak P.G."/>
            <person name="Okada T."/>
            <person name="Islam M.R."/>
            <person name="Uramoto H."/>
            <person name="Mori T."/>
            <person name="Makino Y."/>
            <person name="Matsuura H."/>
            <person name="Xie Y."/>
            <person name="Okada Y."/>
        </authorList>
    </citation>
    <scope>FUNCTION</scope>
</reference>
<reference key="8">
    <citation type="journal article" date="2020" name="Cell. Physiol. Biochem.">
        <title>Annexin A2-S100A10 Represents the Regulatory Component of Maxi-Cl Channel Dependent on Protein Tyrosine Dephosphorylation and Intracellular Calcium.</title>
        <authorList>
            <person name="Islam M.R."/>
            <person name="Okada T."/>
            <person name="Merzlyak P.G."/>
            <person name="Toychiev A.H."/>
            <person name="Ando-Akatsuka Y."/>
            <person name="Sabirov R.Z."/>
            <person name="Okada Y."/>
        </authorList>
    </citation>
    <scope>FUNCTION</scope>
</reference>
<reference key="9">
    <citation type="journal article" date="2010" name="Cell">
        <title>A tissue-specific atlas of mouse protein phosphorylation and expression.</title>
        <authorList>
            <person name="Huttlin E.L."/>
            <person name="Jedrychowski M.P."/>
            <person name="Elias J.E."/>
            <person name="Goswami T."/>
            <person name="Rad R."/>
            <person name="Beausoleil S.A."/>
            <person name="Villen J."/>
            <person name="Haas W."/>
            <person name="Sowa M.E."/>
            <person name="Gygi S.P."/>
        </authorList>
    </citation>
    <scope>IDENTIFICATION BY MASS SPECTROMETRY [LARGE SCALE ANALYSIS]</scope>
    <source>
        <tissue>Lung</tissue>
    </source>
</reference>
<comment type="function">
    <text evidence="2 6 7 8 9 10 11 22">Mediates the transport of prostaglandins (PGs, mainly PGE2, PGE1, PGE3, PGF2alpha, PGD2, PGH2) and thromboxanes (thromboxane B2) across the cell membrane (Probable) (PubMed:10484490). PGs and thromboxanes play fundamental roles in diverse functions such as intraocular pressure, gastric acid secretion, renal salt and water transport, vascular tone, and fever (By similarity). Plays a role in the clearance of PGs from the circulation through cellular uptake, which allows cytoplasmic oxidation and PG signal termination (Probable) (PubMed:10484490). PG uptake is dependent upon membrane potential and involves exchange of a monovalent anionic substrate (PGs exist physiologically as an anionic monovalent form) with a stoichiometry of 1:1 for divalent anions or of 1:2 for monovalent anions (By similarity). Uses lactate, generated by glycolysis, as a counter-substrate to mediate PG influx and efflux. Under nonglycolytic conditions, metabolites other than lactate might serve as counter-substrates. Although the mechanism is not clear, this transporter can function in bidirectional mode (By similarity). When apically expressed in epithelial cells, it facilitates transcellular transport (also called vectorial release), extracting PG from the apical medium and facilitating transport across the cell toward the basolateral side, whereupon the PG exits the cell by simple diffusion (PubMed:18579702). In the renal collecting duct, regulates renal Na+ balance by removing PGE2 from apical medium (PGE2 EP4 receptor is likely localized to the luminal/apical membrane and stimulates Na+ resorption) and transporting it toward the basolateral membrane (where PGE2 EP1 and EP3 receptors inhibit Na+ resorption) (PubMed:18579702). Plays a role in endometrium during decidualization, increasing uptake of PGs by decidual cells (By similarity). Involved in critical events for ovulation (PubMed:27169804). Regulates extracellular PGE2 concentration for follicular development in the ovaries (PubMed:27169804). When expressed intracellularly, such as in macrophages, contributes to vesicular uptake of newly synthesized intracellular PGs, thereby facilitating exocytotic secretion of PGs without being metabolized (PubMed:26474801). Essential core component of the major type of large-conductance anion channel, Maxi-Cl, which plays essential roles in inorganic anion transport, cell volume regulation and release of ATP and glutamate not only in physiological processes but also in pathological processes (PubMed:29046334, PubMed:32442363). May contribute to regulate the transport of organic compounds in testis across the blood-testis-barrier (By similarity).</text>
</comment>
<comment type="catalytic activity">
    <reaction evidence="8">
        <text>prostaglandin E2(out) = prostaglandin E2(in)</text>
        <dbReference type="Rhea" id="RHEA:50984"/>
        <dbReference type="ChEBI" id="CHEBI:606564"/>
    </reaction>
</comment>
<comment type="catalytic activity">
    <reaction evidence="6 21">
        <text>prostaglandin E2(out) + 2 (S)-lactate(in) = prostaglandin E2(in) + 2 (S)-lactate(out)</text>
        <dbReference type="Rhea" id="RHEA:74383"/>
        <dbReference type="ChEBI" id="CHEBI:16651"/>
        <dbReference type="ChEBI" id="CHEBI:606564"/>
    </reaction>
</comment>
<comment type="catalytic activity">
    <reaction evidence="2">
        <text>prostaglandin E1(out) + 2 (S)-lactate(in) = prostaglandin E1(in) + 2 (S)-lactate(out)</text>
        <dbReference type="Rhea" id="RHEA:74395"/>
        <dbReference type="ChEBI" id="CHEBI:16651"/>
        <dbReference type="ChEBI" id="CHEBI:57397"/>
    </reaction>
</comment>
<comment type="catalytic activity">
    <reaction evidence="20">
        <text>prostaglandin F2alpha(out) + 2 (S)-lactate(in) = prostaglandin F2alpha(in) + 2 (S)-lactate(out)</text>
        <dbReference type="Rhea" id="RHEA:74399"/>
        <dbReference type="ChEBI" id="CHEBI:16651"/>
        <dbReference type="ChEBI" id="CHEBI:57404"/>
    </reaction>
</comment>
<comment type="catalytic activity">
    <reaction evidence="20">
        <text>prostaglandin D2(out) + 2 (S)-lactate(in) = prostaglandin D2(in) + 2 (S)-lactate(out)</text>
        <dbReference type="Rhea" id="RHEA:74403"/>
        <dbReference type="ChEBI" id="CHEBI:16651"/>
        <dbReference type="ChEBI" id="CHEBI:57406"/>
    </reaction>
</comment>
<comment type="catalytic activity">
    <reaction evidence="2">
        <text>thromboxane B2(out) + 2 (S)-lactate(in) = thromboxane B2(in) + 2 (S)-lactate(out)</text>
        <dbReference type="Rhea" id="RHEA:74407"/>
        <dbReference type="ChEBI" id="CHEBI:16651"/>
        <dbReference type="ChEBI" id="CHEBI:90696"/>
    </reaction>
</comment>
<comment type="catalytic activity">
    <reaction evidence="22">
        <text>prostaglandin E3(out) + 2 (S)-lactate(in) = prostaglandin E3(in) + 2 (S)-lactate(out)</text>
        <dbReference type="Rhea" id="RHEA:74351"/>
        <dbReference type="ChEBI" id="CHEBI:16651"/>
        <dbReference type="ChEBI" id="CHEBI:133132"/>
    </reaction>
</comment>
<comment type="catalytic activity">
    <reaction evidence="1">
        <text>prostaglandin H2(out) + 2 (S)-lactate(in) = prostaglandin H2(in) + 2 (S)-lactate(out)</text>
        <dbReference type="Rhea" id="RHEA:74379"/>
        <dbReference type="ChEBI" id="CHEBI:16651"/>
        <dbReference type="ChEBI" id="CHEBI:57405"/>
    </reaction>
</comment>
<comment type="activity regulation">
    <text evidence="7 9">Higher dietary salt intake stimulates transcription (PubMed:18579702). Chorionic gonadotropin stimulates expression in the ovaries (PubMed:27169804).</text>
</comment>
<comment type="subcellular location">
    <subcellularLocation>
        <location evidence="2">Cell membrane</location>
        <topology evidence="3">Multi-pass membrane protein</topology>
    </subcellularLocation>
    <subcellularLocation>
        <location evidence="2">Basal cell membrane</location>
        <topology evidence="3">Multi-pass membrane protein</topology>
    </subcellularLocation>
    <subcellularLocation>
        <location evidence="8">Cytoplasm</location>
    </subcellularLocation>
    <subcellularLocation>
        <location evidence="8">Lysosome</location>
    </subcellularLocation>
</comment>
<comment type="alternative products">
    <event type="alternative splicing"/>
    <isoform>
        <id>Q9EPT5-1</id>
        <name>1</name>
        <sequence type="displayed"/>
    </isoform>
    <isoform>
        <id>Q9EPT5-2</id>
        <name>2</name>
        <sequence type="described" ref="VSP_006128 VSP_006129"/>
    </isoform>
</comment>
<comment type="tissue specificity">
    <text evidence="6 7 8 9">Highly expressed in lung and liver (PubMed:10484490). Expressed at lower levels in kidney and skeletal muscle (PubMed:10484490, PubMed:18579702). Expressed in the ovaries (at mRNA and protein levels) (PubMed:27169804). Expressed in peritoneal macrophages (at mRNA and protein levels) (PubMed:26474801).</text>
</comment>
<comment type="similarity">
    <text evidence="19">Belongs to the organo anion transporter (TC 2.A.60) family.</text>
</comment>
<dbReference type="EMBL" id="AF323958">
    <property type="protein sequence ID" value="AAG40332.1"/>
    <property type="molecule type" value="mRNA"/>
</dbReference>
<dbReference type="EMBL" id="BC035200">
    <property type="protein sequence ID" value="AAH35200.1"/>
    <property type="molecule type" value="mRNA"/>
</dbReference>
<dbReference type="CCDS" id="CCDS23448.1">
    <molecule id="Q9EPT5-1"/>
</dbReference>
<dbReference type="RefSeq" id="NP_201571.2">
    <molecule id="Q9EPT5-1"/>
    <property type="nucleotide sequence ID" value="NM_033314.4"/>
</dbReference>
<dbReference type="SMR" id="Q9EPT5"/>
<dbReference type="FunCoup" id="Q9EPT5">
    <property type="interactions" value="489"/>
</dbReference>
<dbReference type="STRING" id="10090.ENSMUSP00000035148"/>
<dbReference type="BindingDB" id="Q9EPT5"/>
<dbReference type="ChEMBL" id="CHEMBL2073699"/>
<dbReference type="GlyCosmos" id="Q9EPT5">
    <property type="glycosylation" value="3 sites, No reported glycans"/>
</dbReference>
<dbReference type="GlyGen" id="Q9EPT5">
    <property type="glycosylation" value="4 sites"/>
</dbReference>
<dbReference type="iPTMnet" id="Q9EPT5"/>
<dbReference type="PhosphoSitePlus" id="Q9EPT5"/>
<dbReference type="SwissPalm" id="Q9EPT5"/>
<dbReference type="PaxDb" id="10090-ENSMUSP00000035148"/>
<dbReference type="PeptideAtlas" id="Q9EPT5"/>
<dbReference type="ProteomicsDB" id="261103">
    <molecule id="Q9EPT5-1"/>
</dbReference>
<dbReference type="ProteomicsDB" id="261104">
    <molecule id="Q9EPT5-2"/>
</dbReference>
<dbReference type="Pumba" id="Q9EPT5"/>
<dbReference type="Antibodypedia" id="33384">
    <property type="antibodies" value="64 antibodies from 15 providers"/>
</dbReference>
<dbReference type="DNASU" id="24059"/>
<dbReference type="Ensembl" id="ENSMUST00000035148.13">
    <molecule id="Q9EPT5-1"/>
    <property type="protein sequence ID" value="ENSMUSP00000035148.7"/>
    <property type="gene ID" value="ENSMUSG00000032548.15"/>
</dbReference>
<dbReference type="Ensembl" id="ENSMUST00000188664.2">
    <molecule id="Q9EPT5-2"/>
    <property type="protein sequence ID" value="ENSMUSP00000140533.2"/>
    <property type="gene ID" value="ENSMUSG00000032548.15"/>
</dbReference>
<dbReference type="GeneID" id="24059"/>
<dbReference type="KEGG" id="mmu:24059"/>
<dbReference type="UCSC" id="uc009rgd.1">
    <molecule id="Q9EPT5-1"/>
    <property type="organism name" value="mouse"/>
</dbReference>
<dbReference type="AGR" id="MGI:1346021"/>
<dbReference type="CTD" id="6578"/>
<dbReference type="MGI" id="MGI:1346021">
    <property type="gene designation" value="Slco2a1"/>
</dbReference>
<dbReference type="VEuPathDB" id="HostDB:ENSMUSG00000032548"/>
<dbReference type="eggNOG" id="KOG3626">
    <property type="taxonomic scope" value="Eukaryota"/>
</dbReference>
<dbReference type="GeneTree" id="ENSGT01130000278312"/>
<dbReference type="HOGENOM" id="CLU_008954_4_1_1"/>
<dbReference type="InParanoid" id="Q9EPT5"/>
<dbReference type="OMA" id="MMVLRCV"/>
<dbReference type="OrthoDB" id="5062115at2759"/>
<dbReference type="PhylomeDB" id="Q9EPT5"/>
<dbReference type="TreeFam" id="TF317540"/>
<dbReference type="Reactome" id="R-MMU-879518">
    <property type="pathway name" value="Transport of organic anions"/>
</dbReference>
<dbReference type="BioGRID-ORCS" id="24059">
    <property type="hits" value="3 hits in 79 CRISPR screens"/>
</dbReference>
<dbReference type="ChiTaRS" id="Slco2a1">
    <property type="organism name" value="mouse"/>
</dbReference>
<dbReference type="PRO" id="PR:Q9EPT5"/>
<dbReference type="Proteomes" id="UP000000589">
    <property type="component" value="Chromosome 9"/>
</dbReference>
<dbReference type="RNAct" id="Q9EPT5">
    <property type="molecule type" value="protein"/>
</dbReference>
<dbReference type="Bgee" id="ENSMUSG00000032548">
    <property type="expression patterns" value="Expressed in placenta labyrinth and 180 other cell types or tissues"/>
</dbReference>
<dbReference type="ExpressionAtlas" id="Q9EPT5">
    <property type="expression patterns" value="baseline and differential"/>
</dbReference>
<dbReference type="GO" id="GO:0009925">
    <property type="term" value="C:basal plasma membrane"/>
    <property type="evidence" value="ECO:0000250"/>
    <property type="project" value="UniProtKB"/>
</dbReference>
<dbReference type="GO" id="GO:0005764">
    <property type="term" value="C:lysosome"/>
    <property type="evidence" value="ECO:0007669"/>
    <property type="project" value="UniProtKB-SubCell"/>
</dbReference>
<dbReference type="GO" id="GO:0005886">
    <property type="term" value="C:plasma membrane"/>
    <property type="evidence" value="ECO:0000305"/>
    <property type="project" value="MGI"/>
</dbReference>
<dbReference type="GO" id="GO:0015132">
    <property type="term" value="F:prostaglandin transmembrane transporter activity"/>
    <property type="evidence" value="ECO:0000314"/>
    <property type="project" value="MGI"/>
</dbReference>
<dbReference type="GO" id="GO:0015732">
    <property type="term" value="P:prostaglandin transport"/>
    <property type="evidence" value="ECO:0000314"/>
    <property type="project" value="MGI"/>
</dbReference>
<dbReference type="CDD" id="cd17461">
    <property type="entry name" value="MFS_SLCO2A_OATP2A"/>
    <property type="match status" value="1"/>
</dbReference>
<dbReference type="FunFam" id="3.30.60.30:FF:000038">
    <property type="entry name" value="Solute carrier organic anion transporter family member"/>
    <property type="match status" value="1"/>
</dbReference>
<dbReference type="Gene3D" id="3.30.60.30">
    <property type="match status" value="1"/>
</dbReference>
<dbReference type="Gene3D" id="1.20.1250.20">
    <property type="entry name" value="MFS general substrate transporter like domains"/>
    <property type="match status" value="1"/>
</dbReference>
<dbReference type="InterPro" id="IPR002350">
    <property type="entry name" value="Kazal_dom"/>
</dbReference>
<dbReference type="InterPro" id="IPR036058">
    <property type="entry name" value="Kazal_dom_sf"/>
</dbReference>
<dbReference type="InterPro" id="IPR020846">
    <property type="entry name" value="MFS_dom"/>
</dbReference>
<dbReference type="InterPro" id="IPR036259">
    <property type="entry name" value="MFS_trans_sf"/>
</dbReference>
<dbReference type="InterPro" id="IPR004156">
    <property type="entry name" value="OATP"/>
</dbReference>
<dbReference type="NCBIfam" id="TIGR00805">
    <property type="entry name" value="oat"/>
    <property type="match status" value="1"/>
</dbReference>
<dbReference type="PANTHER" id="PTHR11388">
    <property type="entry name" value="ORGANIC ANION TRANSPORTER"/>
    <property type="match status" value="1"/>
</dbReference>
<dbReference type="PANTHER" id="PTHR11388:SF14">
    <property type="entry name" value="SOLUTE CARRIER ORGANIC ANION TRANSPORTER FAMILY MEMBER 2A1"/>
    <property type="match status" value="1"/>
</dbReference>
<dbReference type="Pfam" id="PF07648">
    <property type="entry name" value="Kazal_2"/>
    <property type="match status" value="1"/>
</dbReference>
<dbReference type="Pfam" id="PF03137">
    <property type="entry name" value="OATP"/>
    <property type="match status" value="1"/>
</dbReference>
<dbReference type="SUPFAM" id="SSF100895">
    <property type="entry name" value="Kazal-type serine protease inhibitors"/>
    <property type="match status" value="1"/>
</dbReference>
<dbReference type="SUPFAM" id="SSF103473">
    <property type="entry name" value="MFS general substrate transporter"/>
    <property type="match status" value="1"/>
</dbReference>
<dbReference type="PROSITE" id="PS51465">
    <property type="entry name" value="KAZAL_2"/>
    <property type="match status" value="1"/>
</dbReference>
<dbReference type="PROSITE" id="PS50850">
    <property type="entry name" value="MFS"/>
    <property type="match status" value="1"/>
</dbReference>
<feature type="chain" id="PRO_0000191059" description="Solute carrier organic anion transporter family member 2A1">
    <location>
        <begin position="1"/>
        <end position="643"/>
    </location>
</feature>
<feature type="topological domain" description="Cytoplasmic" evidence="3">
    <location>
        <begin position="1"/>
        <end position="32"/>
    </location>
</feature>
<feature type="transmembrane region" description="Helical; Name=1" evidence="3">
    <location>
        <begin position="33"/>
        <end position="52"/>
    </location>
</feature>
<feature type="topological domain" description="Extracellular" evidence="3">
    <location>
        <begin position="53"/>
        <end position="71"/>
    </location>
</feature>
<feature type="transmembrane region" description="Helical; Name=2" evidence="3">
    <location>
        <begin position="72"/>
        <end position="92"/>
    </location>
</feature>
<feature type="topological domain" description="Cytoplasmic" evidence="3">
    <location>
        <begin position="93"/>
        <end position="98"/>
    </location>
</feature>
<feature type="transmembrane region" description="Helical; Name=3" evidence="3">
    <location>
        <begin position="99"/>
        <end position="123"/>
    </location>
</feature>
<feature type="topological domain" description="Extracellular" evidence="3">
    <location>
        <begin position="124"/>
        <end position="167"/>
    </location>
</feature>
<feature type="transmembrane region" description="Helical; Name=4" evidence="3">
    <location>
        <begin position="168"/>
        <end position="196"/>
    </location>
</feature>
<feature type="topological domain" description="Cytoplasmic" evidence="3">
    <location>
        <begin position="197"/>
        <end position="215"/>
    </location>
</feature>
<feature type="transmembrane region" description="Helical; Name=5" evidence="3">
    <location>
        <begin position="216"/>
        <end position="236"/>
    </location>
</feature>
<feature type="topological domain" description="Extracellular" evidence="3">
    <location>
        <begin position="237"/>
        <end position="254"/>
    </location>
</feature>
<feature type="transmembrane region" description="Helical; Name=6" evidence="3">
    <location>
        <begin position="255"/>
        <end position="279"/>
    </location>
</feature>
<feature type="topological domain" description="Cytoplasmic" evidence="3">
    <location>
        <begin position="280"/>
        <end position="320"/>
    </location>
</feature>
<feature type="transmembrane region" description="Helical; Name=7" evidence="3">
    <location>
        <begin position="321"/>
        <end position="342"/>
    </location>
</feature>
<feature type="topological domain" description="Extracellular" evidence="3">
    <location>
        <begin position="343"/>
        <end position="362"/>
    </location>
</feature>
<feature type="transmembrane region" description="Helical; Name=8" evidence="3">
    <location>
        <begin position="363"/>
        <end position="386"/>
    </location>
</feature>
<feature type="topological domain" description="Cytoplasmic" evidence="3">
    <location>
        <begin position="387"/>
        <end position="390"/>
    </location>
</feature>
<feature type="transmembrane region" description="Helical; Name=9" evidence="3">
    <location>
        <begin position="391"/>
        <end position="414"/>
    </location>
</feature>
<feature type="topological domain" description="Extracellular" evidence="3">
    <location>
        <begin position="415"/>
        <end position="517"/>
    </location>
</feature>
<feature type="transmembrane region" description="Helical; Name=10" evidence="3">
    <location>
        <begin position="518"/>
        <end position="540"/>
    </location>
</feature>
<feature type="topological domain" description="Cytoplasmic" evidence="3">
    <location>
        <begin position="541"/>
        <end position="549"/>
    </location>
</feature>
<feature type="transmembrane region" description="Helical; Name=11" evidence="3">
    <location>
        <begin position="550"/>
        <end position="575"/>
    </location>
</feature>
<feature type="topological domain" description="Extracellular" evidence="3">
    <location>
        <begin position="576"/>
        <end position="609"/>
    </location>
</feature>
<feature type="transmembrane region" description="Helical; Name=12" evidence="3">
    <location>
        <begin position="610"/>
        <end position="628"/>
    </location>
</feature>
<feature type="topological domain" description="Cytoplasmic" evidence="3">
    <location>
        <begin position="629"/>
        <end position="643"/>
    </location>
</feature>
<feature type="domain" description="Kazal-like" evidence="4">
    <location>
        <begin position="437"/>
        <end position="495"/>
    </location>
</feature>
<feature type="region of interest" description="Disordered" evidence="5">
    <location>
        <begin position="1"/>
        <end position="20"/>
    </location>
</feature>
<feature type="glycosylation site" description="N-linked (GlcNAc...) asparagine" evidence="3">
    <location>
        <position position="134"/>
    </location>
</feature>
<feature type="glycosylation site" description="N-linked (GlcNAc...) asparagine" evidence="3">
    <location>
        <position position="477"/>
    </location>
</feature>
<feature type="glycosylation site" description="N-linked (GlcNAc...) asparagine" evidence="3">
    <location>
        <position position="490"/>
    </location>
</feature>
<feature type="disulfide bond" evidence="4">
    <location>
        <begin position="443"/>
        <end position="473"/>
    </location>
</feature>
<feature type="disulfide bond" evidence="4">
    <location>
        <begin position="449"/>
        <end position="469"/>
    </location>
</feature>
<feature type="disulfide bond" evidence="4">
    <location>
        <begin position="458"/>
        <end position="493"/>
    </location>
</feature>
<feature type="splice variant" id="VSP_006128" description="In isoform 2." evidence="13">
    <original>GAVNLPAAALGMLFGGILMKRFVFPLQTIPRVAATIMTISIILCAPL</original>
    <variation>AHQVLYIRSLPPAAGTACAQIPSSTLSAETMESSTSPPAMLAAAAST</variation>
    <location>
        <begin position="368"/>
        <end position="414"/>
    </location>
</feature>
<feature type="splice variant" id="VSP_006129" description="In isoform 2." evidence="13">
    <location>
        <begin position="415"/>
        <end position="643"/>
    </location>
</feature>
<feature type="mutagenesis site" description="No effect." evidence="6">
    <original>V</original>
    <variation>M</variation>
    <location>
        <position position="610"/>
    </location>
</feature>
<feature type="mutagenesis site" description="No effect." evidence="6">
    <original>I</original>
    <variation>G</variation>
    <location>
        <position position="611"/>
    </location>
</feature>
<feature type="sequence conflict" description="In Ref. 1; AAG40332." evidence="19" ref="1">
    <original>L</original>
    <variation>F</variation>
    <location>
        <position position="3"/>
    </location>
</feature>